<gene>
    <name type="primary">dinG</name>
    <name type="ordered locus">BQ2027_MB1364C</name>
</gene>
<organism>
    <name type="scientific">Mycobacterium bovis (strain ATCC BAA-935 / AF2122/97)</name>
    <dbReference type="NCBI Taxonomy" id="233413"/>
    <lineage>
        <taxon>Bacteria</taxon>
        <taxon>Bacillati</taxon>
        <taxon>Actinomycetota</taxon>
        <taxon>Actinomycetes</taxon>
        <taxon>Mycobacteriales</taxon>
        <taxon>Mycobacteriaceae</taxon>
        <taxon>Mycobacterium</taxon>
        <taxon>Mycobacterium tuberculosis complex</taxon>
    </lineage>
</organism>
<accession>P64315</accession>
<accession>A0A1R3XY15</accession>
<accession>Q10640</accession>
<accession>X2BHM2</accession>
<name>DING_MYCBO</name>
<comment type="function">
    <text evidence="1">A structure-dependent 5'-3' DNA helicase that unwinds a number of substrates that resemble intermediates in DNA repair, recombination and replication. Translocates on ssDNA with 5'-3' polarity.</text>
</comment>
<comment type="function">
    <text evidence="1">Unwinds G4 DNA (planar arrays of 4 guanine bases stabilized by hydrogen bonds) with both 5'- and 3'- ss-tails.</text>
</comment>
<comment type="catalytic activity">
    <reaction evidence="1">
        <text>Couples ATP hydrolysis with the unwinding of duplex DNA at the replication fork by translocating in the 5'-3' direction. This creates two antiparallel DNA single strands (ssDNA). The leading ssDNA polymer is the template for DNA polymerase III holoenzyme which synthesizes a continuous strand.</text>
        <dbReference type="EC" id="5.6.2.3"/>
    </reaction>
</comment>
<comment type="catalytic activity">
    <reaction evidence="1">
        <text>ATP + H2O = ADP + phosphate + H(+)</text>
        <dbReference type="Rhea" id="RHEA:13065"/>
        <dbReference type="ChEBI" id="CHEBI:15377"/>
        <dbReference type="ChEBI" id="CHEBI:15378"/>
        <dbReference type="ChEBI" id="CHEBI:30616"/>
        <dbReference type="ChEBI" id="CHEBI:43474"/>
        <dbReference type="ChEBI" id="CHEBI:456216"/>
        <dbReference type="EC" id="5.6.2.3"/>
    </reaction>
</comment>
<comment type="cofactor">
    <cofactor evidence="1">
        <name>[4Fe-4S] cluster</name>
        <dbReference type="ChEBI" id="CHEBI:49883"/>
    </cofactor>
</comment>
<comment type="similarity">
    <text evidence="3">Belongs to the helicase family. DinG subfamily.</text>
</comment>
<dbReference type="EC" id="5.6.2.3" evidence="1"/>
<dbReference type="EMBL" id="LT708304">
    <property type="protein sequence ID" value="SIT99967.1"/>
    <property type="molecule type" value="Genomic_DNA"/>
</dbReference>
<dbReference type="RefSeq" id="NP_855018.1">
    <property type="nucleotide sequence ID" value="NC_002945.3"/>
</dbReference>
<dbReference type="RefSeq" id="WP_003898827.1">
    <property type="nucleotide sequence ID" value="NC_002945.4"/>
</dbReference>
<dbReference type="SMR" id="P64315"/>
<dbReference type="GeneID" id="45425307"/>
<dbReference type="KEGG" id="mbo:BQ2027_MB1364C"/>
<dbReference type="PATRIC" id="fig|233413.5.peg.1496"/>
<dbReference type="Proteomes" id="UP000001419">
    <property type="component" value="Chromosome"/>
</dbReference>
<dbReference type="GO" id="GO:0051539">
    <property type="term" value="F:4 iron, 4 sulfur cluster binding"/>
    <property type="evidence" value="ECO:0007669"/>
    <property type="project" value="UniProtKB-KW"/>
</dbReference>
<dbReference type="GO" id="GO:0005524">
    <property type="term" value="F:ATP binding"/>
    <property type="evidence" value="ECO:0007669"/>
    <property type="project" value="UniProtKB-KW"/>
</dbReference>
<dbReference type="GO" id="GO:0016887">
    <property type="term" value="F:ATP hydrolysis activity"/>
    <property type="evidence" value="ECO:0007669"/>
    <property type="project" value="RHEA"/>
</dbReference>
<dbReference type="GO" id="GO:0003677">
    <property type="term" value="F:DNA binding"/>
    <property type="evidence" value="ECO:0007669"/>
    <property type="project" value="UniProtKB-KW"/>
</dbReference>
<dbReference type="GO" id="GO:0003678">
    <property type="term" value="F:DNA helicase activity"/>
    <property type="evidence" value="ECO:0007669"/>
    <property type="project" value="TreeGrafter"/>
</dbReference>
<dbReference type="GO" id="GO:0046872">
    <property type="term" value="F:metal ion binding"/>
    <property type="evidence" value="ECO:0007669"/>
    <property type="project" value="UniProtKB-KW"/>
</dbReference>
<dbReference type="GO" id="GO:0006310">
    <property type="term" value="P:DNA recombination"/>
    <property type="evidence" value="ECO:0007669"/>
    <property type="project" value="UniProtKB-KW"/>
</dbReference>
<dbReference type="GO" id="GO:0006281">
    <property type="term" value="P:DNA repair"/>
    <property type="evidence" value="ECO:0007669"/>
    <property type="project" value="UniProtKB-KW"/>
</dbReference>
<dbReference type="FunFam" id="3.40.50.300:FF:000437">
    <property type="entry name" value="ATP-dependent DNA helicase DinG"/>
    <property type="match status" value="1"/>
</dbReference>
<dbReference type="Gene3D" id="3.40.50.300">
    <property type="entry name" value="P-loop containing nucleotide triphosphate hydrolases"/>
    <property type="match status" value="2"/>
</dbReference>
<dbReference type="InterPro" id="IPR006555">
    <property type="entry name" value="ATP-dep_Helicase_C"/>
</dbReference>
<dbReference type="InterPro" id="IPR011545">
    <property type="entry name" value="DEAD/DEAH_box_helicase_dom"/>
</dbReference>
<dbReference type="InterPro" id="IPR045028">
    <property type="entry name" value="DinG/Rad3-like"/>
</dbReference>
<dbReference type="InterPro" id="IPR014013">
    <property type="entry name" value="Helic_SF1/SF2_ATP-bd_DinG/Rad3"/>
</dbReference>
<dbReference type="InterPro" id="IPR014001">
    <property type="entry name" value="Helicase_ATP-bd"/>
</dbReference>
<dbReference type="InterPro" id="IPR027417">
    <property type="entry name" value="P-loop_NTPase"/>
</dbReference>
<dbReference type="PANTHER" id="PTHR11472">
    <property type="entry name" value="DNA REPAIR DEAD HELICASE RAD3/XP-D SUBFAMILY MEMBER"/>
    <property type="match status" value="1"/>
</dbReference>
<dbReference type="PANTHER" id="PTHR11472:SF34">
    <property type="entry name" value="REGULATOR OF TELOMERE ELONGATION HELICASE 1"/>
    <property type="match status" value="1"/>
</dbReference>
<dbReference type="Pfam" id="PF00270">
    <property type="entry name" value="DEAD"/>
    <property type="match status" value="1"/>
</dbReference>
<dbReference type="Pfam" id="PF13307">
    <property type="entry name" value="Helicase_C_2"/>
    <property type="match status" value="1"/>
</dbReference>
<dbReference type="SMART" id="SM00487">
    <property type="entry name" value="DEXDc"/>
    <property type="match status" value="1"/>
</dbReference>
<dbReference type="SMART" id="SM00491">
    <property type="entry name" value="HELICc2"/>
    <property type="match status" value="1"/>
</dbReference>
<dbReference type="SUPFAM" id="SSF52540">
    <property type="entry name" value="P-loop containing nucleoside triphosphate hydrolases"/>
    <property type="match status" value="2"/>
</dbReference>
<dbReference type="PROSITE" id="PS51193">
    <property type="entry name" value="HELICASE_ATP_BIND_2"/>
    <property type="match status" value="1"/>
</dbReference>
<sequence length="664" mass="70168">MSESVSMSVPELLAIAVAALGGTRRRGQQEMAAAVAHAFETGEHLVVQAGTGTGKSLAYLVPAIIRALCDDAPVVVSTATIALQRQLVDRDLPQLVDSLTNALPRRPKFALLKGRRNYLCLNKIHNSVTASDHDDERPQEELFDPVAVTALGRDVQRLTAWASTTVSGDRDDLKPGVGDRSWSQVSVSARECLGVARCPFGSECFSERARGAAGLADVVVTNHALLAIDAVAESAVLPEHRLLVVDEAHELADRVTSVAAAELTSATLGMAARRITRLVDPKVTQRLQAASATFSSAIHDARPGRIDCLDDEMATYLSALRDAASAARSAIDTGSDTTTASVRAEAGAVLTEISDTASRILASFAPAIPDRSDVVWLEHEDNHESARAVLRVAPLSVAELLATQVFARATTVLTSATLTIGGSFDAMATAWGLTADTPWRGLDVGSPFQHAKSGILYVAAHLPPPGRDGSGSAEQLTEIAELITAAGGRTLGLFSSMRAARAATEAMRERLSTPVLCQGDDSTSTLVEKFTADAATSLFGTLSLWQGVDVPGPSLSLVLIDRIPFPRPDDPLLSARQRAVAARGGNGFMTVAASHAALLLAQGSGRLLRRVTDRGVVAVLDSRMATARYGEFLRASLPPFWQTTNATQVRAALRRLARADAKAH</sequence>
<evidence type="ECO:0000250" key="1">
    <source>
        <dbReference type="UniProtKB" id="A5U229"/>
    </source>
</evidence>
<evidence type="ECO:0000255" key="2">
    <source>
        <dbReference type="PROSITE-ProRule" id="PRU00541"/>
    </source>
</evidence>
<evidence type="ECO:0000305" key="3"/>
<keyword id="KW-0004">4Fe-4S</keyword>
<keyword id="KW-0067">ATP-binding</keyword>
<keyword id="KW-0227">DNA damage</keyword>
<keyword id="KW-0233">DNA recombination</keyword>
<keyword id="KW-0234">DNA repair</keyword>
<keyword id="KW-0238">DNA-binding</keyword>
<keyword id="KW-0347">Helicase</keyword>
<keyword id="KW-0378">Hydrolase</keyword>
<keyword id="KW-0408">Iron</keyword>
<keyword id="KW-0411">Iron-sulfur</keyword>
<keyword id="KW-0413">Isomerase</keyword>
<keyword id="KW-0479">Metal-binding</keyword>
<keyword id="KW-0547">Nucleotide-binding</keyword>
<keyword id="KW-1185">Reference proteome</keyword>
<feature type="chain" id="PRO_0000102004" description="ATP-dependent helicase DinG">
    <location>
        <begin position="1"/>
        <end position="664"/>
    </location>
</feature>
<feature type="domain" description="Helicase ATP-binding" evidence="2">
    <location>
        <begin position="14"/>
        <end position="290"/>
    </location>
</feature>
<feature type="short sequence motif" description="DEAH box">
    <location>
        <begin position="246"/>
        <end position="249"/>
    </location>
</feature>
<feature type="binding site" evidence="2">
    <location>
        <begin position="49"/>
        <end position="56"/>
    </location>
    <ligand>
        <name>ATP</name>
        <dbReference type="ChEBI" id="CHEBI:30616"/>
    </ligand>
</feature>
<feature type="binding site" evidence="1">
    <location>
        <position position="120"/>
    </location>
    <ligand>
        <name>[4Fe-4S] cluster</name>
        <dbReference type="ChEBI" id="CHEBI:49883"/>
    </ligand>
</feature>
<feature type="binding site" evidence="1">
    <location>
        <position position="192"/>
    </location>
    <ligand>
        <name>[4Fe-4S] cluster</name>
        <dbReference type="ChEBI" id="CHEBI:49883"/>
    </ligand>
</feature>
<feature type="binding site" evidence="1">
    <location>
        <position position="198"/>
    </location>
    <ligand>
        <name>[4Fe-4S] cluster</name>
        <dbReference type="ChEBI" id="CHEBI:49883"/>
    </ligand>
</feature>
<feature type="binding site" evidence="1">
    <location>
        <position position="204"/>
    </location>
    <ligand>
        <name>[4Fe-4S] cluster</name>
        <dbReference type="ChEBI" id="CHEBI:49883"/>
    </ligand>
</feature>
<protein>
    <recommendedName>
        <fullName evidence="1">ATP-dependent helicase DinG</fullName>
        <ecNumber evidence="1">5.6.2.3</ecNumber>
    </recommendedName>
    <alternativeName>
        <fullName evidence="3">DNA 5'-3' helicase DinG</fullName>
    </alternativeName>
</protein>
<proteinExistence type="inferred from homology"/>
<reference key="1">
    <citation type="journal article" date="2003" name="Proc. Natl. Acad. Sci. U.S.A.">
        <title>The complete genome sequence of Mycobacterium bovis.</title>
        <authorList>
            <person name="Garnier T."/>
            <person name="Eiglmeier K."/>
            <person name="Camus J.-C."/>
            <person name="Medina N."/>
            <person name="Mansoor H."/>
            <person name="Pryor M."/>
            <person name="Duthoy S."/>
            <person name="Grondin S."/>
            <person name="Lacroix C."/>
            <person name="Monsempe C."/>
            <person name="Simon S."/>
            <person name="Harris B."/>
            <person name="Atkin R."/>
            <person name="Doggett J."/>
            <person name="Mayes R."/>
            <person name="Keating L."/>
            <person name="Wheeler P.R."/>
            <person name="Parkhill J."/>
            <person name="Barrell B.G."/>
            <person name="Cole S.T."/>
            <person name="Gordon S.V."/>
            <person name="Hewinson R.G."/>
        </authorList>
    </citation>
    <scope>NUCLEOTIDE SEQUENCE [LARGE SCALE GENOMIC DNA]</scope>
    <source>
        <strain>ATCC BAA-935 / AF2122/97</strain>
    </source>
</reference>
<reference key="2">
    <citation type="journal article" date="2017" name="Genome Announc.">
        <title>Updated reference genome sequence and annotation of Mycobacterium bovis AF2122/97.</title>
        <authorList>
            <person name="Malone K.M."/>
            <person name="Farrell D."/>
            <person name="Stuber T.P."/>
            <person name="Schubert O.T."/>
            <person name="Aebersold R."/>
            <person name="Robbe-Austerman S."/>
            <person name="Gordon S.V."/>
        </authorList>
    </citation>
    <scope>NUCLEOTIDE SEQUENCE [LARGE SCALE GENOMIC DNA]</scope>
    <scope>GENOME REANNOTATION</scope>
    <source>
        <strain>ATCC BAA-935 / AF2122/97</strain>
    </source>
</reference>